<gene>
    <name type="primary">esrp1</name>
    <name type="synonym">rbm35a</name>
</gene>
<sequence>MTAVSPDYLVVLFTTTAGANGSKLGSDEKEVIQLLWKVINLANKKVGELHEVTVRPDHLELTEECKEITRIEADSLYVAPQLEQALQQFNQSVGNELNIGVGTSFCICTDGQLHIRQVLHPEASKKNILLPECFYSFFDLRKEFLKCCPGSSDTNELDVHAMASYLGFEKKSTRYRYGASEVDDMGDIIVTLISEPYNYKFSDPERVNYKFESGTCSKLEIIDDNTIIRARGLPWQSSDQDIARFFKGLNIAKGGAALCLNAQGRRNGEALVRFVSEEHRDLALQRHKHHMGNRYIEVYKATGEDFLKIAGGTSNEVAQFLSKENQVIVRMRGLPFTATAEEVLAFFGQQCPVTGGKEGILFVTYPDNRPTGDAFVLFACEEYAQNALKKHKELLGKRYIELFRSTAAEVQQVLNRYSSAPLIPLPTPPIIPVLPQPFIPPVNVRDCIRLRGLPYAATIEDILEFLGEFSADIRTHGVHMVLNHQGRPSGDSFIQMKSADRAYLAAQKCHKKTMKDRYVEVFQCSAEEMNFVLMGGTLNRNGLSPPPCKLPCLSPPSYTFPAQAAVIPTEAAALYQPSLLLNPRSLQPSAAYYPAGAQLFMNYTAYYPSPPGSPSSLGFFPASASVSSIPPHNTGAMVRMQGLAYNSGVKEILNFFQGYQYSPEDGLLPVNDQARALLTHPKEWVCI</sequence>
<keyword id="KW-0507">mRNA processing</keyword>
<keyword id="KW-0508">mRNA splicing</keyword>
<keyword id="KW-0539">Nucleus</keyword>
<keyword id="KW-1185">Reference proteome</keyword>
<keyword id="KW-0677">Repeat</keyword>
<keyword id="KW-0694">RNA-binding</keyword>
<dbReference type="EMBL" id="BC076946">
    <property type="protein sequence ID" value="AAH76946.1"/>
    <property type="molecule type" value="mRNA"/>
</dbReference>
<dbReference type="RefSeq" id="NP_001005057.1">
    <property type="nucleotide sequence ID" value="NM_001005057.1"/>
</dbReference>
<dbReference type="SMR" id="Q6DEZ7"/>
<dbReference type="FunCoup" id="Q6DEZ7">
    <property type="interactions" value="1697"/>
</dbReference>
<dbReference type="STRING" id="8364.ENSXETP00000029751"/>
<dbReference type="PaxDb" id="8364-ENSXETP00000059731"/>
<dbReference type="DNASU" id="448608"/>
<dbReference type="GeneID" id="448608"/>
<dbReference type="KEGG" id="xtr:448608"/>
<dbReference type="AGR" id="Xenbase:XB-GENE-985138"/>
<dbReference type="CTD" id="54845"/>
<dbReference type="Xenbase" id="XB-GENE-985138">
    <property type="gene designation" value="esrp1"/>
</dbReference>
<dbReference type="eggNOG" id="KOG1365">
    <property type="taxonomic scope" value="Eukaryota"/>
</dbReference>
<dbReference type="InParanoid" id="Q6DEZ7"/>
<dbReference type="OMA" id="FTLTFHV"/>
<dbReference type="OrthoDB" id="431068at2759"/>
<dbReference type="PhylomeDB" id="Q6DEZ7"/>
<dbReference type="Proteomes" id="UP000008143">
    <property type="component" value="Chromosome 6"/>
</dbReference>
<dbReference type="Bgee" id="ENSXETG00000014667">
    <property type="expression patterns" value="Expressed in neurula embryo and 14 other cell types or tissues"/>
</dbReference>
<dbReference type="GO" id="GO:0005634">
    <property type="term" value="C:nucleus"/>
    <property type="evidence" value="ECO:0000250"/>
    <property type="project" value="UniProtKB"/>
</dbReference>
<dbReference type="GO" id="GO:0003729">
    <property type="term" value="F:mRNA binding"/>
    <property type="evidence" value="ECO:0000250"/>
    <property type="project" value="UniProtKB"/>
</dbReference>
<dbReference type="GO" id="GO:0006397">
    <property type="term" value="P:mRNA processing"/>
    <property type="evidence" value="ECO:0007669"/>
    <property type="project" value="UniProtKB-KW"/>
</dbReference>
<dbReference type="GO" id="GO:0043484">
    <property type="term" value="P:regulation of RNA splicing"/>
    <property type="evidence" value="ECO:0000250"/>
    <property type="project" value="UniProtKB"/>
</dbReference>
<dbReference type="GO" id="GO:0008380">
    <property type="term" value="P:RNA splicing"/>
    <property type="evidence" value="ECO:0007669"/>
    <property type="project" value="UniProtKB-KW"/>
</dbReference>
<dbReference type="CDD" id="cd12736">
    <property type="entry name" value="RRM1_ESRP1"/>
    <property type="match status" value="1"/>
</dbReference>
<dbReference type="CDD" id="cd12739">
    <property type="entry name" value="RRM2_ESRP1"/>
    <property type="match status" value="1"/>
</dbReference>
<dbReference type="CDD" id="cd12742">
    <property type="entry name" value="RRM3_ESRP1_ESRP2"/>
    <property type="match status" value="1"/>
</dbReference>
<dbReference type="FunFam" id="3.30.70.330:FF:000041">
    <property type="entry name" value="Epithelial splicing regulatory protein 1"/>
    <property type="match status" value="1"/>
</dbReference>
<dbReference type="FunFam" id="3.30.70.330:FF:000070">
    <property type="entry name" value="Epithelial splicing regulatory protein 1"/>
    <property type="match status" value="1"/>
</dbReference>
<dbReference type="FunFam" id="3.30.420.10:FF:000023">
    <property type="entry name" value="epithelial splicing regulatory protein 1 isoform X1"/>
    <property type="match status" value="1"/>
</dbReference>
<dbReference type="FunFam" id="3.30.70.330:FF:000056">
    <property type="entry name" value="epithelial splicing regulatory protein 1 isoform X1"/>
    <property type="match status" value="1"/>
</dbReference>
<dbReference type="Gene3D" id="3.30.70.330">
    <property type="match status" value="3"/>
</dbReference>
<dbReference type="Gene3D" id="3.30.420.10">
    <property type="entry name" value="Ribonuclease H-like superfamily/Ribonuclease H"/>
    <property type="match status" value="1"/>
</dbReference>
<dbReference type="InterPro" id="IPR050666">
    <property type="entry name" value="ESRP"/>
</dbReference>
<dbReference type="InterPro" id="IPR034427">
    <property type="entry name" value="ESRP1_RRM1"/>
</dbReference>
<dbReference type="InterPro" id="IPR012677">
    <property type="entry name" value="Nucleotide-bd_a/b_plait_sf"/>
</dbReference>
<dbReference type="InterPro" id="IPR035979">
    <property type="entry name" value="RBD_domain_sf"/>
</dbReference>
<dbReference type="InterPro" id="IPR012337">
    <property type="entry name" value="RNaseH-like_sf"/>
</dbReference>
<dbReference type="InterPro" id="IPR036397">
    <property type="entry name" value="RNaseH_sf"/>
</dbReference>
<dbReference type="InterPro" id="IPR000504">
    <property type="entry name" value="RRM_dom"/>
</dbReference>
<dbReference type="PANTHER" id="PTHR13976">
    <property type="entry name" value="HETEROGENEOUS NUCLEAR RIBONUCLEOPROTEIN-RELATED"/>
    <property type="match status" value="1"/>
</dbReference>
<dbReference type="SMART" id="SM00360">
    <property type="entry name" value="RRM"/>
    <property type="match status" value="3"/>
</dbReference>
<dbReference type="SUPFAM" id="SSF53098">
    <property type="entry name" value="Ribonuclease H-like"/>
    <property type="match status" value="1"/>
</dbReference>
<dbReference type="SUPFAM" id="SSF54928">
    <property type="entry name" value="RNA-binding domain, RBD"/>
    <property type="match status" value="2"/>
</dbReference>
<dbReference type="PROSITE" id="PS50102">
    <property type="entry name" value="RRM"/>
    <property type="match status" value="2"/>
</dbReference>
<comment type="function">
    <text evidence="1">mRNA splicing factor that regulates the formation of epithelial cell-specific isoforms. Specifically regulates the expression of FGFR2-IIIb, an epithelial cell-specific isoform of fgfr2. Acts by directly binding specific sequences in mRNAs. Binds the GU-rich sequence motifs in the ISE/ISS-3, a cis-element regulatory region present in the mRNA of fgfr2 (By similarity).</text>
</comment>
<comment type="subcellular location">
    <subcellularLocation>
        <location evidence="1">Nucleus</location>
    </subcellularLocation>
</comment>
<comment type="similarity">
    <text evidence="3">Belongs to the ESRP family.</text>
</comment>
<proteinExistence type="evidence at transcript level"/>
<protein>
    <recommendedName>
        <fullName>Epithelial splicing regulatory protein 1</fullName>
    </recommendedName>
    <alternativeName>
        <fullName>RNA-binding motif protein 35A</fullName>
    </alternativeName>
    <alternativeName>
        <fullName>RNA-binding protein 35A</fullName>
    </alternativeName>
</protein>
<feature type="chain" id="PRO_0000273049" description="Epithelial splicing regulatory protein 1">
    <location>
        <begin position="1"/>
        <end position="687"/>
    </location>
</feature>
<feature type="domain" description="RRM 1" evidence="2">
    <location>
        <begin position="226"/>
        <end position="303"/>
    </location>
</feature>
<feature type="domain" description="RRM 2" evidence="2">
    <location>
        <begin position="327"/>
        <end position="407"/>
    </location>
</feature>
<feature type="domain" description="RRM 3" evidence="2">
    <location>
        <begin position="446"/>
        <end position="526"/>
    </location>
</feature>
<reference key="1">
    <citation type="submission" date="2004-07" db="EMBL/GenBank/DDBJ databases">
        <authorList>
            <consortium name="NIH - Xenopus Gene Collection (XGC) project"/>
        </authorList>
    </citation>
    <scope>NUCLEOTIDE SEQUENCE [LARGE SCALE MRNA]</scope>
    <source>
        <tissue>Embryo</tissue>
    </source>
</reference>
<evidence type="ECO:0000250" key="1"/>
<evidence type="ECO:0000255" key="2">
    <source>
        <dbReference type="PROSITE-ProRule" id="PRU00176"/>
    </source>
</evidence>
<evidence type="ECO:0000305" key="3"/>
<organism>
    <name type="scientific">Xenopus tropicalis</name>
    <name type="common">Western clawed frog</name>
    <name type="synonym">Silurana tropicalis</name>
    <dbReference type="NCBI Taxonomy" id="8364"/>
    <lineage>
        <taxon>Eukaryota</taxon>
        <taxon>Metazoa</taxon>
        <taxon>Chordata</taxon>
        <taxon>Craniata</taxon>
        <taxon>Vertebrata</taxon>
        <taxon>Euteleostomi</taxon>
        <taxon>Amphibia</taxon>
        <taxon>Batrachia</taxon>
        <taxon>Anura</taxon>
        <taxon>Pipoidea</taxon>
        <taxon>Pipidae</taxon>
        <taxon>Xenopodinae</taxon>
        <taxon>Xenopus</taxon>
        <taxon>Silurana</taxon>
    </lineage>
</organism>
<accession>Q6DEZ7</accession>
<name>ESRP1_XENTR</name>